<proteinExistence type="evidence at protein level"/>
<gene>
    <name type="primary">TS2</name>
    <name type="ordered locus">At1g72810</name>
    <name type="ORF">F3N23.1</name>
</gene>
<dbReference type="EC" id="4.2.3.1"/>
<dbReference type="EMBL" id="AC008017">
    <property type="protein sequence ID" value="AAD55628.1"/>
    <property type="molecule type" value="Genomic_DNA"/>
</dbReference>
<dbReference type="EMBL" id="CP002684">
    <property type="protein sequence ID" value="AEE35375.1"/>
    <property type="molecule type" value="Genomic_DNA"/>
</dbReference>
<dbReference type="EMBL" id="AY099629">
    <property type="protein sequence ID" value="AAM20480.1"/>
    <property type="molecule type" value="mRNA"/>
</dbReference>
<dbReference type="EMBL" id="BT002151">
    <property type="protein sequence ID" value="AAN72162.1"/>
    <property type="molecule type" value="mRNA"/>
</dbReference>
<dbReference type="PIR" id="A96753">
    <property type="entry name" value="A96753"/>
</dbReference>
<dbReference type="RefSeq" id="NP_565047.1">
    <property type="nucleotide sequence ID" value="NM_105939.4"/>
</dbReference>
<dbReference type="SMR" id="Q9SSP5"/>
<dbReference type="BioGRID" id="28831">
    <property type="interactions" value="16"/>
</dbReference>
<dbReference type="FunCoup" id="Q9SSP5">
    <property type="interactions" value="303"/>
</dbReference>
<dbReference type="IntAct" id="Q9SSP5">
    <property type="interactions" value="1"/>
</dbReference>
<dbReference type="STRING" id="3702.Q9SSP5"/>
<dbReference type="PaxDb" id="3702-AT1G72810.1"/>
<dbReference type="ProteomicsDB" id="234427"/>
<dbReference type="EnsemblPlants" id="AT1G72810.1">
    <property type="protein sequence ID" value="AT1G72810.1"/>
    <property type="gene ID" value="AT1G72810"/>
</dbReference>
<dbReference type="GeneID" id="843612"/>
<dbReference type="Gramene" id="AT1G72810.1">
    <property type="protein sequence ID" value="AT1G72810.1"/>
    <property type="gene ID" value="AT1G72810"/>
</dbReference>
<dbReference type="KEGG" id="ath:AT1G72810"/>
<dbReference type="Araport" id="AT1G72810"/>
<dbReference type="TAIR" id="AT1G72810"/>
<dbReference type="eggNOG" id="ENOG502QSQC">
    <property type="taxonomic scope" value="Eukaryota"/>
</dbReference>
<dbReference type="HOGENOM" id="CLU_028142_5_0_1"/>
<dbReference type="InParanoid" id="Q9SSP5"/>
<dbReference type="OMA" id="HWRYREF"/>
<dbReference type="OrthoDB" id="7773036at2759"/>
<dbReference type="PhylomeDB" id="Q9SSP5"/>
<dbReference type="BioCyc" id="ARA:AT1G72810-MONOMER"/>
<dbReference type="UniPathway" id="UPA00050">
    <property type="reaction ID" value="UER00065"/>
</dbReference>
<dbReference type="PRO" id="PR:Q9SSP5"/>
<dbReference type="Proteomes" id="UP000006548">
    <property type="component" value="Chromosome 1"/>
</dbReference>
<dbReference type="ExpressionAtlas" id="Q9SSP5">
    <property type="expression patterns" value="baseline and differential"/>
</dbReference>
<dbReference type="GO" id="GO:0009507">
    <property type="term" value="C:chloroplast"/>
    <property type="evidence" value="ECO:0007669"/>
    <property type="project" value="UniProtKB-SubCell"/>
</dbReference>
<dbReference type="GO" id="GO:0030170">
    <property type="term" value="F:pyridoxal phosphate binding"/>
    <property type="evidence" value="ECO:0007669"/>
    <property type="project" value="InterPro"/>
</dbReference>
<dbReference type="GO" id="GO:0004795">
    <property type="term" value="F:threonine synthase activity"/>
    <property type="evidence" value="ECO:0007669"/>
    <property type="project" value="UniProtKB-EC"/>
</dbReference>
<dbReference type="GO" id="GO:0009088">
    <property type="term" value="P:threonine biosynthetic process"/>
    <property type="evidence" value="ECO:0007669"/>
    <property type="project" value="UniProtKB-UniPathway"/>
</dbReference>
<dbReference type="CDD" id="cd01563">
    <property type="entry name" value="Thr-synth_1"/>
    <property type="match status" value="1"/>
</dbReference>
<dbReference type="FunFam" id="3.40.50.1100:FF:000030">
    <property type="entry name" value="Threonine synthase 1, chloroplastic"/>
    <property type="match status" value="1"/>
</dbReference>
<dbReference type="Gene3D" id="3.40.50.1100">
    <property type="match status" value="2"/>
</dbReference>
<dbReference type="InterPro" id="IPR050214">
    <property type="entry name" value="Cys_Synth/Cystath_Beta-Synth"/>
</dbReference>
<dbReference type="InterPro" id="IPR000634">
    <property type="entry name" value="Ser/Thr_deHydtase_PyrdxlP-BS"/>
</dbReference>
<dbReference type="InterPro" id="IPR004450">
    <property type="entry name" value="Thr_synthase-like"/>
</dbReference>
<dbReference type="InterPro" id="IPR001926">
    <property type="entry name" value="TrpB-like_PALP"/>
</dbReference>
<dbReference type="InterPro" id="IPR036052">
    <property type="entry name" value="TrpB-like_PALP_sf"/>
</dbReference>
<dbReference type="NCBIfam" id="TIGR00260">
    <property type="entry name" value="thrC"/>
    <property type="match status" value="1"/>
</dbReference>
<dbReference type="PANTHER" id="PTHR10314">
    <property type="entry name" value="CYSTATHIONINE BETA-SYNTHASE"/>
    <property type="match status" value="1"/>
</dbReference>
<dbReference type="Pfam" id="PF00291">
    <property type="entry name" value="PALP"/>
    <property type="match status" value="1"/>
</dbReference>
<dbReference type="SUPFAM" id="SSF53686">
    <property type="entry name" value="Tryptophan synthase beta subunit-like PLP-dependent enzymes"/>
    <property type="match status" value="1"/>
</dbReference>
<dbReference type="PROSITE" id="PS00165">
    <property type="entry name" value="DEHYDRATASE_SER_THR"/>
    <property type="match status" value="1"/>
</dbReference>
<reference key="1">
    <citation type="journal article" date="2000" name="Nature">
        <title>Sequence and analysis of chromosome 1 of the plant Arabidopsis thaliana.</title>
        <authorList>
            <person name="Theologis A."/>
            <person name="Ecker J.R."/>
            <person name="Palm C.J."/>
            <person name="Federspiel N.A."/>
            <person name="Kaul S."/>
            <person name="White O."/>
            <person name="Alonso J."/>
            <person name="Altafi H."/>
            <person name="Araujo R."/>
            <person name="Bowman C.L."/>
            <person name="Brooks S.Y."/>
            <person name="Buehler E."/>
            <person name="Chan A."/>
            <person name="Chao Q."/>
            <person name="Chen H."/>
            <person name="Cheuk R.F."/>
            <person name="Chin C.W."/>
            <person name="Chung M.K."/>
            <person name="Conn L."/>
            <person name="Conway A.B."/>
            <person name="Conway A.R."/>
            <person name="Creasy T.H."/>
            <person name="Dewar K."/>
            <person name="Dunn P."/>
            <person name="Etgu P."/>
            <person name="Feldblyum T.V."/>
            <person name="Feng J.-D."/>
            <person name="Fong B."/>
            <person name="Fujii C.Y."/>
            <person name="Gill J.E."/>
            <person name="Goldsmith A.D."/>
            <person name="Haas B."/>
            <person name="Hansen N.F."/>
            <person name="Hughes B."/>
            <person name="Huizar L."/>
            <person name="Hunter J.L."/>
            <person name="Jenkins J."/>
            <person name="Johnson-Hopson C."/>
            <person name="Khan S."/>
            <person name="Khaykin E."/>
            <person name="Kim C.J."/>
            <person name="Koo H.L."/>
            <person name="Kremenetskaia I."/>
            <person name="Kurtz D.B."/>
            <person name="Kwan A."/>
            <person name="Lam B."/>
            <person name="Langin-Hooper S."/>
            <person name="Lee A."/>
            <person name="Lee J.M."/>
            <person name="Lenz C.A."/>
            <person name="Li J.H."/>
            <person name="Li Y.-P."/>
            <person name="Lin X."/>
            <person name="Liu S.X."/>
            <person name="Liu Z.A."/>
            <person name="Luros J.S."/>
            <person name="Maiti R."/>
            <person name="Marziali A."/>
            <person name="Militscher J."/>
            <person name="Miranda M."/>
            <person name="Nguyen M."/>
            <person name="Nierman W.C."/>
            <person name="Osborne B.I."/>
            <person name="Pai G."/>
            <person name="Peterson J."/>
            <person name="Pham P.K."/>
            <person name="Rizzo M."/>
            <person name="Rooney T."/>
            <person name="Rowley D."/>
            <person name="Sakano H."/>
            <person name="Salzberg S.L."/>
            <person name="Schwartz J.R."/>
            <person name="Shinn P."/>
            <person name="Southwick A.M."/>
            <person name="Sun H."/>
            <person name="Tallon L.J."/>
            <person name="Tambunga G."/>
            <person name="Toriumi M.J."/>
            <person name="Town C.D."/>
            <person name="Utterback T."/>
            <person name="Van Aken S."/>
            <person name="Vaysberg M."/>
            <person name="Vysotskaia V.S."/>
            <person name="Walker M."/>
            <person name="Wu D."/>
            <person name="Yu G."/>
            <person name="Fraser C.M."/>
            <person name="Venter J.C."/>
            <person name="Davis R.W."/>
        </authorList>
    </citation>
    <scope>NUCLEOTIDE SEQUENCE [LARGE SCALE GENOMIC DNA]</scope>
    <source>
        <strain>cv. Columbia</strain>
    </source>
</reference>
<reference key="2">
    <citation type="journal article" date="2017" name="Plant J.">
        <title>Araport11: a complete reannotation of the Arabidopsis thaliana reference genome.</title>
        <authorList>
            <person name="Cheng C.Y."/>
            <person name="Krishnakumar V."/>
            <person name="Chan A.P."/>
            <person name="Thibaud-Nissen F."/>
            <person name="Schobel S."/>
            <person name="Town C.D."/>
        </authorList>
    </citation>
    <scope>GENOME REANNOTATION</scope>
    <source>
        <strain>cv. Columbia</strain>
    </source>
</reference>
<reference key="3">
    <citation type="journal article" date="2003" name="Science">
        <title>Empirical analysis of transcriptional activity in the Arabidopsis genome.</title>
        <authorList>
            <person name="Yamada K."/>
            <person name="Lim J."/>
            <person name="Dale J.M."/>
            <person name="Chen H."/>
            <person name="Shinn P."/>
            <person name="Palm C.J."/>
            <person name="Southwick A.M."/>
            <person name="Wu H.C."/>
            <person name="Kim C.J."/>
            <person name="Nguyen M."/>
            <person name="Pham P.K."/>
            <person name="Cheuk R.F."/>
            <person name="Karlin-Newmann G."/>
            <person name="Liu S.X."/>
            <person name="Lam B."/>
            <person name="Sakano H."/>
            <person name="Wu T."/>
            <person name="Yu G."/>
            <person name="Miranda M."/>
            <person name="Quach H.L."/>
            <person name="Tripp M."/>
            <person name="Chang C.H."/>
            <person name="Lee J.M."/>
            <person name="Toriumi M.J."/>
            <person name="Chan M.M."/>
            <person name="Tang C.C."/>
            <person name="Onodera C.S."/>
            <person name="Deng J.M."/>
            <person name="Akiyama K."/>
            <person name="Ansari Y."/>
            <person name="Arakawa T."/>
            <person name="Banh J."/>
            <person name="Banno F."/>
            <person name="Bowser L."/>
            <person name="Brooks S.Y."/>
            <person name="Carninci P."/>
            <person name="Chao Q."/>
            <person name="Choy N."/>
            <person name="Enju A."/>
            <person name="Goldsmith A.D."/>
            <person name="Gurjal M."/>
            <person name="Hansen N.F."/>
            <person name="Hayashizaki Y."/>
            <person name="Johnson-Hopson C."/>
            <person name="Hsuan V.W."/>
            <person name="Iida K."/>
            <person name="Karnes M."/>
            <person name="Khan S."/>
            <person name="Koesema E."/>
            <person name="Ishida J."/>
            <person name="Jiang P.X."/>
            <person name="Jones T."/>
            <person name="Kawai J."/>
            <person name="Kamiya A."/>
            <person name="Meyers C."/>
            <person name="Nakajima M."/>
            <person name="Narusaka M."/>
            <person name="Seki M."/>
            <person name="Sakurai T."/>
            <person name="Satou M."/>
            <person name="Tamse R."/>
            <person name="Vaysberg M."/>
            <person name="Wallender E.K."/>
            <person name="Wong C."/>
            <person name="Yamamura Y."/>
            <person name="Yuan S."/>
            <person name="Shinozaki K."/>
            <person name="Davis R.W."/>
            <person name="Theologis A."/>
            <person name="Ecker J.R."/>
        </authorList>
    </citation>
    <scope>NUCLEOTIDE SEQUENCE [LARGE SCALE MRNA]</scope>
    <source>
        <strain>cv. Columbia</strain>
    </source>
</reference>
<reference key="4">
    <citation type="journal article" date="2009" name="Mol. Syst. Biol.">
        <title>Understanding the regulation of aspartate metabolism using a model based on measured kinetic parameters.</title>
        <authorList>
            <person name="Curien G."/>
            <person name="Bastien O."/>
            <person name="Robert-Genthon M."/>
            <person name="Cornish-Bowden A."/>
            <person name="Cardenas M.L."/>
            <person name="Dumas R."/>
        </authorList>
    </citation>
    <scope>FUNCTION</scope>
    <scope>CHARACTERIZATION</scope>
</reference>
<organism>
    <name type="scientific">Arabidopsis thaliana</name>
    <name type="common">Mouse-ear cress</name>
    <dbReference type="NCBI Taxonomy" id="3702"/>
    <lineage>
        <taxon>Eukaryota</taxon>
        <taxon>Viridiplantae</taxon>
        <taxon>Streptophyta</taxon>
        <taxon>Embryophyta</taxon>
        <taxon>Tracheophyta</taxon>
        <taxon>Spermatophyta</taxon>
        <taxon>Magnoliopsida</taxon>
        <taxon>eudicotyledons</taxon>
        <taxon>Gunneridae</taxon>
        <taxon>Pentapetalae</taxon>
        <taxon>rosids</taxon>
        <taxon>malvids</taxon>
        <taxon>Brassicales</taxon>
        <taxon>Brassicaceae</taxon>
        <taxon>Camelineae</taxon>
        <taxon>Arabidopsis</taxon>
    </lineage>
</organism>
<accession>Q9SSP5</accession>
<sequence length="516" mass="56925">MASFSLPHSATYFPSHSETSLKPHSAASFTVRCTSASPAVPPQTPQKPRRSPDENIRDEARRRPHQLQNLSARYVPFNAPPSSTESYSLDEIVYRSQSGALLDVQHDFAALKRYDGEFWRNLFDSRVGKTNWPYGSGVWSKKEWVLPEIDDDDIVSAFEGNSNLFWAERFGKQYLQMNDLWVKHCGISHTGSFKDLGMSVLVSQVNRLRKMNKPVIGVGCASTGDTSAALSAYCASAGIPSIVFLPADKISMAQLVQPIANGAFVLSIDTDFDGCMHLIREVTAELPIYLANSLNSLRLEGQKTAAIEILQQFNWQVPDWVIVPGGNLGNIYAFYKGFHMCKELGLVDRIPRLVCAQAANANPLYLHYKSGFKEDFNPLKANTTFASAIQIGDPVSIDRAVYALKKSNGIVEEATEEELMDATALADSTGMFICPHTGVALTALMKLRKSGVIGANDRTVVVSTAHGLKFTQSKIDYHSKNIKEMACRLANPPVKVKAKFGSVMDVLKEYLKSNDK</sequence>
<name>THRC2_ARATH</name>
<comment type="function">
    <text evidence="3">Catalyzes the gamma-elimination of phosphate from L-phosphohomoserine and the beta-addition of water to produce L-threonine.</text>
</comment>
<comment type="catalytic activity">
    <reaction>
        <text>O-phospho-L-homoserine + H2O = L-threonine + phosphate</text>
        <dbReference type="Rhea" id="RHEA:10840"/>
        <dbReference type="ChEBI" id="CHEBI:15377"/>
        <dbReference type="ChEBI" id="CHEBI:43474"/>
        <dbReference type="ChEBI" id="CHEBI:57590"/>
        <dbReference type="ChEBI" id="CHEBI:57926"/>
        <dbReference type="EC" id="4.2.3.1"/>
    </reaction>
</comment>
<comment type="cofactor">
    <cofactor evidence="1">
        <name>pyridoxal 5'-phosphate</name>
        <dbReference type="ChEBI" id="CHEBI:597326"/>
    </cofactor>
</comment>
<comment type="activity regulation">
    <text>Allosterically activated by S-adenosyl-methionine (SAM).</text>
</comment>
<comment type="pathway">
    <text>Amino-acid biosynthesis; L-threonine biosynthesis; L-threonine from L-aspartate: step 5/5.</text>
</comment>
<comment type="subunit">
    <text evidence="1">Homodimer.</text>
</comment>
<comment type="subcellular location">
    <subcellularLocation>
        <location evidence="4">Plastid</location>
        <location evidence="4">Chloroplast</location>
    </subcellularLocation>
</comment>
<comment type="miscellaneous">
    <text evidence="1">Binds 4 S-adenosyl-L-methionine (SAM) molecules per dimer. Although SAM3 and SAM4 have equivalent positions, their interactions with the protein are not identical. SAM3 interacts with Lys-172 and Asn-178 of monomer B, whereas SAM4 interacts only with Lys-172 of monomer A (By similarity).</text>
</comment>
<comment type="miscellaneous">
    <text>Much less active than TS1 at physiological concentrations of S-adenosyl-methionine (20 uM).</text>
</comment>
<comment type="similarity">
    <text evidence="4">Belongs to the threonine synthase family.</text>
</comment>
<evidence type="ECO:0000250" key="1"/>
<evidence type="ECO:0000256" key="2">
    <source>
        <dbReference type="SAM" id="MobiDB-lite"/>
    </source>
</evidence>
<evidence type="ECO:0000269" key="3">
    <source>
    </source>
</evidence>
<evidence type="ECO:0000305" key="4"/>
<protein>
    <recommendedName>
        <fullName>Threonine synthase 2, chloroplastic</fullName>
        <ecNumber>4.2.3.1</ecNumber>
    </recommendedName>
</protein>
<keyword id="KW-0021">Allosteric enzyme</keyword>
<keyword id="KW-0028">Amino-acid biosynthesis</keyword>
<keyword id="KW-0150">Chloroplast</keyword>
<keyword id="KW-0456">Lyase</keyword>
<keyword id="KW-0934">Plastid</keyword>
<keyword id="KW-0663">Pyridoxal phosphate</keyword>
<keyword id="KW-1185">Reference proteome</keyword>
<keyword id="KW-0949">S-adenosyl-L-methionine</keyword>
<keyword id="KW-0791">Threonine biosynthesis</keyword>
<keyword id="KW-0809">Transit peptide</keyword>
<feature type="transit peptide" description="Chloroplast" evidence="4">
    <location>
        <begin position="1"/>
        <end position="33"/>
    </location>
</feature>
<feature type="chain" id="PRO_0000379516" description="Threonine synthase 2, chloroplastic">
    <location>
        <begin position="34"/>
        <end position="516"/>
    </location>
</feature>
<feature type="region of interest" description="Disordered" evidence="2">
    <location>
        <begin position="1"/>
        <end position="55"/>
    </location>
</feature>
<feature type="compositionally biased region" description="Polar residues" evidence="2">
    <location>
        <begin position="1"/>
        <end position="37"/>
    </location>
</feature>
<feature type="binding site" evidence="1">
    <location>
        <begin position="133"/>
        <end position="135"/>
    </location>
    <ligand>
        <name>S-adenosyl-L-methionine</name>
        <dbReference type="ChEBI" id="CHEBI:59789"/>
        <label>1</label>
        <note>ligand shared between dimeric partners</note>
    </ligand>
</feature>
<feature type="binding site" evidence="1">
    <location>
        <begin position="156"/>
        <end position="158"/>
    </location>
    <ligand>
        <name>S-adenosyl-L-methionine</name>
        <dbReference type="ChEBI" id="CHEBI:59789"/>
        <label>1</label>
        <note>ligand shared between dimeric partners</note>
    </ligand>
</feature>
<feature type="binding site" evidence="1">
    <location>
        <position position="163"/>
    </location>
    <ligand>
        <name>S-adenosyl-L-methionine</name>
        <dbReference type="ChEBI" id="CHEBI:59789"/>
        <label>2</label>
        <note>ligand shared between dimeric partners</note>
    </ligand>
</feature>
<feature type="binding site" evidence="1">
    <location>
        <position position="164"/>
    </location>
    <ligand>
        <name>S-adenosyl-L-methionine</name>
        <dbReference type="ChEBI" id="CHEBI:59789"/>
        <label>2</label>
        <note>ligand shared between dimeric partners</note>
    </ligand>
</feature>
<feature type="binding site" description="in monomer B" evidence="1">
    <location>
        <position position="172"/>
    </location>
    <ligand>
        <name>S-adenosyl-L-methionine</name>
        <dbReference type="ChEBI" id="CHEBI:59789"/>
        <label>3</label>
    </ligand>
</feature>
<feature type="binding site" description="in monomer A" evidence="1">
    <location>
        <position position="172"/>
    </location>
    <ligand>
        <name>S-adenosyl-L-methionine</name>
        <dbReference type="ChEBI" id="CHEBI:59789"/>
        <label>4</label>
    </ligand>
</feature>
<feature type="binding site" description="in monomer B" evidence="1">
    <location>
        <position position="178"/>
    </location>
    <ligand>
        <name>S-adenosyl-L-methionine</name>
        <dbReference type="ChEBI" id="CHEBI:59789"/>
        <label>3</label>
    </ligand>
</feature>
<feature type="binding site" evidence="1">
    <location>
        <begin position="326"/>
        <end position="330"/>
    </location>
    <ligand>
        <name>pyridoxal 5'-phosphate</name>
        <dbReference type="ChEBI" id="CHEBI:597326"/>
    </ligand>
</feature>
<feature type="binding site" evidence="1">
    <location>
        <position position="464"/>
    </location>
    <ligand>
        <name>pyridoxal 5'-phosphate</name>
        <dbReference type="ChEBI" id="CHEBI:597326"/>
    </ligand>
</feature>
<feature type="modified residue" description="N6-(pyridoxal phosphate)lysine" evidence="1">
    <location>
        <position position="194"/>
    </location>
</feature>